<comment type="function">
    <text evidence="1">The alpha subunit is responsible for the aldol cleavage of indoleglycerol phosphate to indole and glyceraldehyde 3-phosphate.</text>
</comment>
<comment type="catalytic activity">
    <reaction evidence="1">
        <text>(1S,2R)-1-C-(indol-3-yl)glycerol 3-phosphate + L-serine = D-glyceraldehyde 3-phosphate + L-tryptophan + H2O</text>
        <dbReference type="Rhea" id="RHEA:10532"/>
        <dbReference type="ChEBI" id="CHEBI:15377"/>
        <dbReference type="ChEBI" id="CHEBI:33384"/>
        <dbReference type="ChEBI" id="CHEBI:57912"/>
        <dbReference type="ChEBI" id="CHEBI:58866"/>
        <dbReference type="ChEBI" id="CHEBI:59776"/>
        <dbReference type="EC" id="4.2.1.20"/>
    </reaction>
</comment>
<comment type="pathway">
    <text evidence="1">Amino-acid biosynthesis; L-tryptophan biosynthesis; L-tryptophan from chorismate: step 5/5.</text>
</comment>
<comment type="subunit">
    <text evidence="1">Tetramer of two alpha and two beta chains.</text>
</comment>
<comment type="similarity">
    <text evidence="1">Belongs to the TrpA family.</text>
</comment>
<gene>
    <name evidence="1" type="primary">trpA</name>
    <name type="ordered locus">LBF_2527</name>
</gene>
<dbReference type="EC" id="4.2.1.20" evidence="1"/>
<dbReference type="EMBL" id="CP000777">
    <property type="protein sequence ID" value="ABZ95011.1"/>
    <property type="molecule type" value="Genomic_DNA"/>
</dbReference>
<dbReference type="RefSeq" id="WP_012389546.1">
    <property type="nucleotide sequence ID" value="NC_010842.1"/>
</dbReference>
<dbReference type="SMR" id="B0SDM7"/>
<dbReference type="KEGG" id="lbf:LBF_2527"/>
<dbReference type="HOGENOM" id="CLU_016734_0_0_12"/>
<dbReference type="UniPathway" id="UPA00035">
    <property type="reaction ID" value="UER00044"/>
</dbReference>
<dbReference type="GO" id="GO:0005829">
    <property type="term" value="C:cytosol"/>
    <property type="evidence" value="ECO:0007669"/>
    <property type="project" value="TreeGrafter"/>
</dbReference>
<dbReference type="GO" id="GO:0004834">
    <property type="term" value="F:tryptophan synthase activity"/>
    <property type="evidence" value="ECO:0007669"/>
    <property type="project" value="UniProtKB-UniRule"/>
</dbReference>
<dbReference type="CDD" id="cd04724">
    <property type="entry name" value="Tryptophan_synthase_alpha"/>
    <property type="match status" value="1"/>
</dbReference>
<dbReference type="FunFam" id="3.20.20.70:FF:000037">
    <property type="entry name" value="Tryptophan synthase alpha chain"/>
    <property type="match status" value="1"/>
</dbReference>
<dbReference type="Gene3D" id="3.20.20.70">
    <property type="entry name" value="Aldolase class I"/>
    <property type="match status" value="1"/>
</dbReference>
<dbReference type="HAMAP" id="MF_00131">
    <property type="entry name" value="Trp_synth_alpha"/>
    <property type="match status" value="1"/>
</dbReference>
<dbReference type="InterPro" id="IPR013785">
    <property type="entry name" value="Aldolase_TIM"/>
</dbReference>
<dbReference type="InterPro" id="IPR011060">
    <property type="entry name" value="RibuloseP-bd_barrel"/>
</dbReference>
<dbReference type="InterPro" id="IPR018204">
    <property type="entry name" value="Trp_synthase_alpha_AS"/>
</dbReference>
<dbReference type="InterPro" id="IPR002028">
    <property type="entry name" value="Trp_synthase_suA"/>
</dbReference>
<dbReference type="NCBIfam" id="TIGR00262">
    <property type="entry name" value="trpA"/>
    <property type="match status" value="1"/>
</dbReference>
<dbReference type="PANTHER" id="PTHR43406:SF1">
    <property type="entry name" value="TRYPTOPHAN SYNTHASE ALPHA CHAIN, CHLOROPLASTIC"/>
    <property type="match status" value="1"/>
</dbReference>
<dbReference type="PANTHER" id="PTHR43406">
    <property type="entry name" value="TRYPTOPHAN SYNTHASE, ALPHA CHAIN"/>
    <property type="match status" value="1"/>
</dbReference>
<dbReference type="Pfam" id="PF00290">
    <property type="entry name" value="Trp_syntA"/>
    <property type="match status" value="1"/>
</dbReference>
<dbReference type="SUPFAM" id="SSF51366">
    <property type="entry name" value="Ribulose-phoshate binding barrel"/>
    <property type="match status" value="1"/>
</dbReference>
<dbReference type="PROSITE" id="PS00167">
    <property type="entry name" value="TRP_SYNTHASE_ALPHA"/>
    <property type="match status" value="1"/>
</dbReference>
<feature type="chain" id="PRO_1000095725" description="Tryptophan synthase alpha chain">
    <location>
        <begin position="1"/>
        <end position="266"/>
    </location>
</feature>
<feature type="active site" description="Proton acceptor" evidence="1">
    <location>
        <position position="47"/>
    </location>
</feature>
<feature type="active site" description="Proton acceptor" evidence="1">
    <location>
        <position position="58"/>
    </location>
</feature>
<protein>
    <recommendedName>
        <fullName evidence="1">Tryptophan synthase alpha chain</fullName>
        <ecNumber evidence="1">4.2.1.20</ecNumber>
    </recommendedName>
</protein>
<organism>
    <name type="scientific">Leptospira biflexa serovar Patoc (strain Patoc 1 / Ames)</name>
    <dbReference type="NCBI Taxonomy" id="355278"/>
    <lineage>
        <taxon>Bacteria</taxon>
        <taxon>Pseudomonadati</taxon>
        <taxon>Spirochaetota</taxon>
        <taxon>Spirochaetia</taxon>
        <taxon>Leptospirales</taxon>
        <taxon>Leptospiraceae</taxon>
        <taxon>Leptospira</taxon>
    </lineage>
</organism>
<accession>B0SDM7</accession>
<evidence type="ECO:0000255" key="1">
    <source>
        <dbReference type="HAMAP-Rule" id="MF_00131"/>
    </source>
</evidence>
<keyword id="KW-0028">Amino-acid biosynthesis</keyword>
<keyword id="KW-0057">Aromatic amino acid biosynthesis</keyword>
<keyword id="KW-0456">Lyase</keyword>
<keyword id="KW-0822">Tryptophan biosynthesis</keyword>
<name>TRPA_LEPBA</name>
<proteinExistence type="inferred from homology"/>
<reference key="1">
    <citation type="journal article" date="2008" name="PLoS ONE">
        <title>Genome sequence of the saprophyte Leptospira biflexa provides insights into the evolution of Leptospira and the pathogenesis of leptospirosis.</title>
        <authorList>
            <person name="Picardeau M."/>
            <person name="Bulach D.M."/>
            <person name="Bouchier C."/>
            <person name="Zuerner R.L."/>
            <person name="Zidane N."/>
            <person name="Wilson P.J."/>
            <person name="Creno S."/>
            <person name="Kuczek E.S."/>
            <person name="Bommezzadri S."/>
            <person name="Davis J.C."/>
            <person name="McGrath A."/>
            <person name="Johnson M.J."/>
            <person name="Boursaux-Eude C."/>
            <person name="Seemann T."/>
            <person name="Rouy Z."/>
            <person name="Coppel R.L."/>
            <person name="Rood J.I."/>
            <person name="Lajus A."/>
            <person name="Davies J.K."/>
            <person name="Medigue C."/>
            <person name="Adler B."/>
        </authorList>
    </citation>
    <scope>NUCLEOTIDE SEQUENCE [LARGE SCALE GENOMIC DNA]</scope>
    <source>
        <strain>Patoc 1 / Ames</strain>
    </source>
</reference>
<sequence>MSKIKELFESGKFKSAFIPYFTLGDPNYNDSIEFGKTILDGGADILELGIPFSDPVADGPVIQRAVARSLKNKFSFDEIFRVTKQIHLHKQETPLVYLTYFNPIYHCGITKFLDNAKDSGVVGLVIPDLPFDTIESETLFQELRLRDMDLIHLVTPASTKKRIEALRKTSTGFIYYVTSFGVTGERREFSVDLKERIRFLKDTIQLPICAGFGISTPEQASQIAGYADGIIIGSAIQRVIEENGQDASKAKNVLADYITKIRASIS</sequence>